<keyword id="KW-0256">Endoplasmic reticulum</keyword>
<keyword id="KW-0472">Membrane</keyword>
<keyword id="KW-0560">Oxidoreductase</keyword>
<keyword id="KW-1185">Reference proteome</keyword>
<keyword id="KW-0712">Selenocysteine</keyword>
<keyword id="KW-0893">Thyroid hormones biosynthesis</keyword>
<keyword id="KW-0812">Transmembrane</keyword>
<keyword id="KW-1133">Transmembrane helix</keyword>
<accession>Q9IAX2</accession>
<reference evidence="6 8" key="1">
    <citation type="journal article" date="1999" name="J. Biol. Chem.">
        <title>Cloning and expression of the chicken type 2 iodothyronine 5'-deiodinase.</title>
        <authorList>
            <person name="Gereben B."/>
            <person name="Bartha T."/>
            <person name="Tu H.M."/>
            <person name="Harney J.W."/>
            <person name="Rudas P."/>
            <person name="Larsen P.R."/>
        </authorList>
    </citation>
    <scope>NUCLEOTIDE SEQUENCE [MRNA]</scope>
    <scope>FUNCTION</scope>
    <scope>BIOPHYSICOCHEMICAL PROPERTIES</scope>
    <scope>TISSUE SPECIFICITY</scope>
    <scope>CATALYTIC ACTIVITY</scope>
    <scope>ACTIVITY REGULATION</scope>
    <source>
        <tissue evidence="4">Embryo</tissue>
        <tissue evidence="4">Pituitary</tissue>
    </source>
</reference>
<dbReference type="EC" id="1.21.99.4" evidence="4"/>
<dbReference type="EMBL" id="AF125575">
    <property type="protein sequence ID" value="AAD33251.1"/>
    <property type="molecule type" value="mRNA"/>
</dbReference>
<dbReference type="FunCoup" id="Q9IAX2">
    <property type="interactions" value="1"/>
</dbReference>
<dbReference type="STRING" id="9031.ENSGALP00000068702"/>
<dbReference type="VEuPathDB" id="HostDB:geneid_373903"/>
<dbReference type="InParanoid" id="Q9IAX2"/>
<dbReference type="OrthoDB" id="428577at2759"/>
<dbReference type="PhylomeDB" id="Q9IAX2"/>
<dbReference type="SABIO-RK" id="Q9IAX2"/>
<dbReference type="Proteomes" id="UP000000539">
    <property type="component" value="Unassembled WGS sequence"/>
</dbReference>
<dbReference type="GO" id="GO:0005789">
    <property type="term" value="C:endoplasmic reticulum membrane"/>
    <property type="evidence" value="ECO:0000250"/>
    <property type="project" value="UniProtKB"/>
</dbReference>
<dbReference type="GO" id="GO:0004800">
    <property type="term" value="F:thyroxine 5'-deiodinase activity"/>
    <property type="evidence" value="ECO:0000314"/>
    <property type="project" value="UniProtKB"/>
</dbReference>
<dbReference type="GO" id="GO:0042446">
    <property type="term" value="P:hormone biosynthetic process"/>
    <property type="evidence" value="ECO:0007669"/>
    <property type="project" value="UniProtKB-KW"/>
</dbReference>
<dbReference type="GO" id="GO:0042404">
    <property type="term" value="P:thyroid hormone catabolic process"/>
    <property type="evidence" value="ECO:0000314"/>
    <property type="project" value="UniProtKB"/>
</dbReference>
<dbReference type="GO" id="GO:0006590">
    <property type="term" value="P:thyroid hormone generation"/>
    <property type="evidence" value="ECO:0000314"/>
    <property type="project" value="UniProtKB"/>
</dbReference>
<dbReference type="GO" id="GO:0042403">
    <property type="term" value="P:thyroid hormone metabolic process"/>
    <property type="evidence" value="ECO:0000318"/>
    <property type="project" value="GO_Central"/>
</dbReference>
<dbReference type="FunFam" id="3.40.30.10:FF:000194">
    <property type="entry name" value="Iodothyronine deiodinase"/>
    <property type="match status" value="1"/>
</dbReference>
<dbReference type="Gene3D" id="3.40.30.10">
    <property type="entry name" value="Glutaredoxin"/>
    <property type="match status" value="1"/>
</dbReference>
<dbReference type="InterPro" id="IPR000643">
    <property type="entry name" value="Iodothyronine_deiodinase"/>
</dbReference>
<dbReference type="InterPro" id="IPR008261">
    <property type="entry name" value="Iodothyronine_deiodinase_AS"/>
</dbReference>
<dbReference type="InterPro" id="IPR036249">
    <property type="entry name" value="Thioredoxin-like_sf"/>
</dbReference>
<dbReference type="PANTHER" id="PTHR11781">
    <property type="entry name" value="IODOTHYRONINE DEIODINASE"/>
    <property type="match status" value="1"/>
</dbReference>
<dbReference type="PANTHER" id="PTHR11781:SF20">
    <property type="entry name" value="TYPE II IODOTHYRONINE DEIODINASE"/>
    <property type="match status" value="1"/>
</dbReference>
<dbReference type="Pfam" id="PF00837">
    <property type="entry name" value="T4_deiodinase"/>
    <property type="match status" value="1"/>
</dbReference>
<dbReference type="PIRSF" id="PIRSF001330">
    <property type="entry name" value="IOD"/>
    <property type="match status" value="1"/>
</dbReference>
<dbReference type="SUPFAM" id="SSF52833">
    <property type="entry name" value="Thioredoxin-like"/>
    <property type="match status" value="1"/>
</dbReference>
<dbReference type="PROSITE" id="PS01205">
    <property type="entry name" value="T4_DEIODINASE"/>
    <property type="match status" value="1"/>
</dbReference>
<comment type="function">
    <text evidence="1 4">Plays a crucial role in the metabolism of thyroid hormones (TH) and has specific roles in TH activation and inactivation by deiodination (PubMed:10318780). Catalyzes the deiodination of L-thyroxine (T4) to 3,5,3'-triiodothyronine (T3) and 3,3',5'-triiodothyronine (rT3) to 3,3'-diiodothyronine (3,3'-T2) via outer-ring deiodination (ORD) (PubMed:10318780). Catalyzes the deiodination of 3',5'-diiodothyronine (3',5'-T2) to 3'-monoiodothyronine (3'-T1) via ORD (By similarity). Catalyzes the phenolic ring deiodinations of 3,3',5'-triiodothyronamine and 3',5'- diiodothyronamine (By similarity).</text>
</comment>
<comment type="catalytic activity">
    <reaction evidence="3 4">
        <text>3,3',5-triiodo-L-thyronine + iodide + A + H(+) = L-thyroxine + AH2</text>
        <dbReference type="Rhea" id="RHEA:19745"/>
        <dbReference type="ChEBI" id="CHEBI:13193"/>
        <dbReference type="ChEBI" id="CHEBI:15378"/>
        <dbReference type="ChEBI" id="CHEBI:16382"/>
        <dbReference type="ChEBI" id="CHEBI:17499"/>
        <dbReference type="ChEBI" id="CHEBI:58448"/>
        <dbReference type="ChEBI" id="CHEBI:533015"/>
        <dbReference type="EC" id="1.21.99.4"/>
    </reaction>
    <physiologicalReaction direction="right-to-left" evidence="7">
        <dbReference type="Rhea" id="RHEA:19747"/>
    </physiologicalReaction>
</comment>
<comment type="catalytic activity">
    <reaction evidence="4">
        <text>3,3'-diiodo-L-thyronine + iodide + A + H(+) = 3,3',5'-triiodo-L-thyronine + AH2</text>
        <dbReference type="Rhea" id="RHEA:82575"/>
        <dbReference type="ChEBI" id="CHEBI:13193"/>
        <dbReference type="ChEBI" id="CHEBI:15378"/>
        <dbReference type="ChEBI" id="CHEBI:16382"/>
        <dbReference type="ChEBI" id="CHEBI:17499"/>
        <dbReference type="ChEBI" id="CHEBI:57261"/>
        <dbReference type="ChEBI" id="CHEBI:176514"/>
    </reaction>
    <physiologicalReaction direction="right-to-left" evidence="7">
        <dbReference type="Rhea" id="RHEA:82577"/>
    </physiologicalReaction>
</comment>
<comment type="catalytic activity">
    <reaction evidence="1">
        <text>3'-iodo-L-thyronine + iodide + A + H(+) = 3',5'-diiodo-L-thyronine + AH2</text>
        <dbReference type="Rhea" id="RHEA:82899"/>
        <dbReference type="ChEBI" id="CHEBI:13193"/>
        <dbReference type="ChEBI" id="CHEBI:15378"/>
        <dbReference type="ChEBI" id="CHEBI:16382"/>
        <dbReference type="ChEBI" id="CHEBI:17499"/>
        <dbReference type="ChEBI" id="CHEBI:195762"/>
        <dbReference type="ChEBI" id="CHEBI:232695"/>
    </reaction>
    <physiologicalReaction direction="right-to-left" evidence="1">
        <dbReference type="Rhea" id="RHEA:82901"/>
    </physiologicalReaction>
</comment>
<comment type="catalytic activity">
    <reaction evidence="1">
        <text>3,3'-diiodothyronamine + iodide + A + H(+) = 3,3',5'-triiodothyronamine + AH2</text>
        <dbReference type="Rhea" id="RHEA:83795"/>
        <dbReference type="ChEBI" id="CHEBI:13193"/>
        <dbReference type="ChEBI" id="CHEBI:15378"/>
        <dbReference type="ChEBI" id="CHEBI:16382"/>
        <dbReference type="ChEBI" id="CHEBI:17499"/>
        <dbReference type="ChEBI" id="CHEBI:233341"/>
        <dbReference type="ChEBI" id="CHEBI:233343"/>
    </reaction>
    <physiologicalReaction direction="right-to-left" evidence="1">
        <dbReference type="Rhea" id="RHEA:83797"/>
    </physiologicalReaction>
</comment>
<comment type="catalytic activity">
    <reaction evidence="1">
        <text>3'-iodothyronamine + iodide + A + H(+) = 3',5'-diiodothyronamine + AH2</text>
        <dbReference type="Rhea" id="RHEA:83803"/>
        <dbReference type="ChEBI" id="CHEBI:13193"/>
        <dbReference type="ChEBI" id="CHEBI:15378"/>
        <dbReference type="ChEBI" id="CHEBI:16382"/>
        <dbReference type="ChEBI" id="CHEBI:17499"/>
        <dbReference type="ChEBI" id="CHEBI:233339"/>
        <dbReference type="ChEBI" id="CHEBI:233342"/>
    </reaction>
    <physiologicalReaction direction="right-to-left" evidence="1">
        <dbReference type="Rhea" id="RHEA:83805"/>
    </physiologicalReaction>
</comment>
<comment type="activity regulation">
    <text evidence="4">Not inhibited by N(6)-propylthiouracil.</text>
</comment>
<comment type="biophysicochemical properties">
    <kinetics>
        <KM evidence="4">1.1 nM for thyroxine</KM>
        <KM evidence="4">8.69 nM for 3,3',5'-triiodo-L-thyronine</KM>
        <Vmax evidence="4">0.34 pmol/min/mg enzyme towards thyroxine</Vmax>
        <Vmax evidence="4">0.28 pmol/min/mg enzyme towards 3,3',5'-triiodo-L-thyronine</Vmax>
    </kinetics>
</comment>
<comment type="subunit">
    <text evidence="1">Predominantly monomer. Can form homodimers but homodimerization is not essential for enzyme activity.</text>
</comment>
<comment type="subcellular location">
    <subcellularLocation>
        <location evidence="1">Endoplasmic reticulum membrane</location>
        <topology evidence="1">Single-pass type III membrane protein</topology>
    </subcellularLocation>
</comment>
<comment type="tissue specificity">
    <text evidence="4">Highly expressed in liver and in various parts of the brain including telencephalon, hippocampus, cerebellum, and brain stem, and weakly expressed in thyroid, lung, and small intestine. Not detected in skeletal muscle, heart atria or ventricle, gizzard or kidney.</text>
</comment>
<comment type="similarity">
    <text evidence="2">Belongs to the iodothyronine deiodinase family.</text>
</comment>
<gene>
    <name type="primary">DIO2</name>
</gene>
<proteinExistence type="evidence at protein level"/>
<sequence length="279" mass="31033">MGLLSADLLITLQILPVFFSNCLFLALYDSVILLKHMVLFLSRSKSARGEWRRMLTSEGLRCVWNSFLLDAYKQVKLGGEAPNSSVIHIAKGNDGSNSSWKSVGGKCGTKCHLLDFANSERPLVVNFGSATUPPFTSQLSAFSKLVEEFSGVADFLLVYIDEAHPSDGWAAPGISPSSFEVKKHRNQEDRCAAAHQLLERFSLPPQCQVVADCMDNNANVAYGVSFERVCIVQRQKIAYLGGKGPFFYNLQEVRLWLEQNFSKRUNPLSTEDLSTDVSL</sequence>
<organism>
    <name type="scientific">Gallus gallus</name>
    <name type="common">Chicken</name>
    <dbReference type="NCBI Taxonomy" id="9031"/>
    <lineage>
        <taxon>Eukaryota</taxon>
        <taxon>Metazoa</taxon>
        <taxon>Chordata</taxon>
        <taxon>Craniata</taxon>
        <taxon>Vertebrata</taxon>
        <taxon>Euteleostomi</taxon>
        <taxon>Archelosauria</taxon>
        <taxon>Archosauria</taxon>
        <taxon>Dinosauria</taxon>
        <taxon>Saurischia</taxon>
        <taxon>Theropoda</taxon>
        <taxon>Coelurosauria</taxon>
        <taxon>Aves</taxon>
        <taxon>Neognathae</taxon>
        <taxon>Galloanserae</taxon>
        <taxon>Galliformes</taxon>
        <taxon>Phasianidae</taxon>
        <taxon>Phasianinae</taxon>
        <taxon>Gallus</taxon>
    </lineage>
</organism>
<evidence type="ECO:0000250" key="1">
    <source>
        <dbReference type="UniProtKB" id="Q92813"/>
    </source>
</evidence>
<evidence type="ECO:0000255" key="2"/>
<evidence type="ECO:0000255" key="3">
    <source>
        <dbReference type="PROSITE-ProRule" id="PRU10107"/>
    </source>
</evidence>
<evidence type="ECO:0000269" key="4">
    <source>
    </source>
</evidence>
<evidence type="ECO:0000303" key="5">
    <source>
    </source>
</evidence>
<evidence type="ECO:0000305" key="6"/>
<evidence type="ECO:0000305" key="7">
    <source>
    </source>
</evidence>
<evidence type="ECO:0000312" key="8">
    <source>
        <dbReference type="EMBL" id="AAD33251.1"/>
    </source>
</evidence>
<name>IOD2_CHICK</name>
<protein>
    <recommendedName>
        <fullName>Type II iodothyronine deiodinase</fullName>
        <ecNumber evidence="4">1.21.99.4</ecNumber>
    </recommendedName>
    <alternativeName>
        <fullName>5DII</fullName>
    </alternativeName>
    <alternativeName>
        <fullName>DIOII</fullName>
    </alternativeName>
    <alternativeName>
        <fullName>Type 2 DI</fullName>
    </alternativeName>
    <alternativeName>
        <fullName>Type-II 5'-deiodinase</fullName>
    </alternativeName>
</protein>
<feature type="chain" id="PRO_0000154320" description="Type II iodothyronine deiodinase">
    <location>
        <begin position="1"/>
        <end position="279"/>
    </location>
</feature>
<feature type="topological domain" description="Lumenal" evidence="1">
    <location>
        <begin position="1"/>
        <end position="7"/>
    </location>
</feature>
<feature type="transmembrane region" description="Helical; Signal-anchor for type III membrane protein" evidence="2">
    <location>
        <begin position="8"/>
        <end position="28"/>
    </location>
</feature>
<feature type="topological domain" description="Cytoplasmic" evidence="1">
    <location>
        <begin position="29"/>
        <end position="279"/>
    </location>
</feature>
<feature type="active site" evidence="1">
    <location>
        <position position="132"/>
    </location>
</feature>
<feature type="non-standard amino acid" description="Selenocysteine" evidence="5">
    <location>
        <position position="132"/>
    </location>
</feature>
<feature type="non-standard amino acid" description="Selenocysteine" evidence="5">
    <location>
        <position position="265"/>
    </location>
</feature>